<protein>
    <recommendedName>
        <fullName evidence="1">Elongation factor 4</fullName>
        <shortName evidence="1">EF-4</shortName>
        <ecNumber evidence="1">3.6.5.n1</ecNumber>
    </recommendedName>
    <alternativeName>
        <fullName evidence="1">Ribosomal back-translocase LepA</fullName>
    </alternativeName>
</protein>
<sequence>MTDVPVSRIRNFSIIAHIDHGKSTLADRLLQTTGTVADREMKEQFLDNMELERERGITIKLQAARMAYQASDKEDYVLNLIDTPGHVDFSYEVSRSLAACEGALLVVDASQGVEAQTLANVYLAIEHDLEIIPVLNKIDLPGAEPDRVKQEIEEIVGLDCSGAILASAKTGIGIAEILESIVHLVPPPEDTTQEPLRALIFDSYYDLYRGVVVYFRVMDGTVKKGDRVRLMASGKEYDVDELGVLSPTQVQVDELHAGEVGYFAAAIKAVEDARVGDTITLAKAQAAEPLPGYVEAKPMVFCGMFPTDADQFPDLRDALERLKLNDAALNYEPETSSAMGFGFRCGFLGLLHMEIVQERLEREYNLDLIITAPSVVYRITTLKGETLLIDNPSSLPDPQHREKIEEPFVQVDMITPEEYVGTLMELGQSRRGTFKDMKYLTPGRTTLVYELPLAEVVTDFFDQMKSRSRGYASMEYHLIGYRENPLVKLDILINADPVDSLAAIVHRDKAYYTGRALVSKLRELIPRHQFKIPIQAAIGAKVIASESIPALRKDVLAKCYGGDVSRKRKLLEKQKAGKKRMKSVGRVDVPQEAFMAVLRITDE</sequence>
<reference key="1">
    <citation type="journal article" date="2008" name="Proc. Natl. Acad. Sci. U.S.A.">
        <title>Niche adaptation and genome expansion in the chlorophyll d-producing cyanobacterium Acaryochloris marina.</title>
        <authorList>
            <person name="Swingley W.D."/>
            <person name="Chen M."/>
            <person name="Cheung P.C."/>
            <person name="Conrad A.L."/>
            <person name="Dejesa L.C."/>
            <person name="Hao J."/>
            <person name="Honchak B.M."/>
            <person name="Karbach L.E."/>
            <person name="Kurdoglu A."/>
            <person name="Lahiri S."/>
            <person name="Mastrian S.D."/>
            <person name="Miyashita H."/>
            <person name="Page L."/>
            <person name="Ramakrishna P."/>
            <person name="Satoh S."/>
            <person name="Sattley W.M."/>
            <person name="Shimada Y."/>
            <person name="Taylor H.L."/>
            <person name="Tomo T."/>
            <person name="Tsuchiya T."/>
            <person name="Wang Z.T."/>
            <person name="Raymond J."/>
            <person name="Mimuro M."/>
            <person name="Blankenship R.E."/>
            <person name="Touchman J.W."/>
        </authorList>
    </citation>
    <scope>NUCLEOTIDE SEQUENCE [LARGE SCALE GENOMIC DNA]</scope>
    <source>
        <strain>MBIC 11017</strain>
    </source>
</reference>
<gene>
    <name evidence="1" type="primary">lepA</name>
    <name type="ordered locus">AM1_5255</name>
</gene>
<evidence type="ECO:0000255" key="1">
    <source>
        <dbReference type="HAMAP-Rule" id="MF_00071"/>
    </source>
</evidence>
<name>LEPA_ACAM1</name>
<comment type="function">
    <text evidence="1">Required for accurate and efficient protein synthesis under certain stress conditions. May act as a fidelity factor of the translation reaction, by catalyzing a one-codon backward translocation of tRNAs on improperly translocated ribosomes. Back-translocation proceeds from a post-translocation (POST) complex to a pre-translocation (PRE) complex, thus giving elongation factor G a second chance to translocate the tRNAs correctly. Binds to ribosomes in a GTP-dependent manner.</text>
</comment>
<comment type="catalytic activity">
    <reaction evidence="1">
        <text>GTP + H2O = GDP + phosphate + H(+)</text>
        <dbReference type="Rhea" id="RHEA:19669"/>
        <dbReference type="ChEBI" id="CHEBI:15377"/>
        <dbReference type="ChEBI" id="CHEBI:15378"/>
        <dbReference type="ChEBI" id="CHEBI:37565"/>
        <dbReference type="ChEBI" id="CHEBI:43474"/>
        <dbReference type="ChEBI" id="CHEBI:58189"/>
        <dbReference type="EC" id="3.6.5.n1"/>
    </reaction>
</comment>
<comment type="subcellular location">
    <subcellularLocation>
        <location evidence="1">Cell inner membrane</location>
        <topology evidence="1">Peripheral membrane protein</topology>
        <orientation evidence="1">Cytoplasmic side</orientation>
    </subcellularLocation>
</comment>
<comment type="similarity">
    <text evidence="1">Belongs to the TRAFAC class translation factor GTPase superfamily. Classic translation factor GTPase family. LepA subfamily.</text>
</comment>
<feature type="chain" id="PRO_1000075121" description="Elongation factor 4">
    <location>
        <begin position="1"/>
        <end position="603"/>
    </location>
</feature>
<feature type="domain" description="tr-type G">
    <location>
        <begin position="7"/>
        <end position="189"/>
    </location>
</feature>
<feature type="binding site" evidence="1">
    <location>
        <begin position="19"/>
        <end position="24"/>
    </location>
    <ligand>
        <name>GTP</name>
        <dbReference type="ChEBI" id="CHEBI:37565"/>
    </ligand>
</feature>
<feature type="binding site" evidence="1">
    <location>
        <begin position="136"/>
        <end position="139"/>
    </location>
    <ligand>
        <name>GTP</name>
        <dbReference type="ChEBI" id="CHEBI:37565"/>
    </ligand>
</feature>
<proteinExistence type="inferred from homology"/>
<organism>
    <name type="scientific">Acaryochloris marina (strain MBIC 11017)</name>
    <dbReference type="NCBI Taxonomy" id="329726"/>
    <lineage>
        <taxon>Bacteria</taxon>
        <taxon>Bacillati</taxon>
        <taxon>Cyanobacteriota</taxon>
        <taxon>Cyanophyceae</taxon>
        <taxon>Acaryochloridales</taxon>
        <taxon>Acaryochloridaceae</taxon>
        <taxon>Acaryochloris</taxon>
    </lineage>
</organism>
<keyword id="KW-0997">Cell inner membrane</keyword>
<keyword id="KW-1003">Cell membrane</keyword>
<keyword id="KW-0342">GTP-binding</keyword>
<keyword id="KW-0378">Hydrolase</keyword>
<keyword id="KW-0472">Membrane</keyword>
<keyword id="KW-0547">Nucleotide-binding</keyword>
<keyword id="KW-0648">Protein biosynthesis</keyword>
<keyword id="KW-1185">Reference proteome</keyword>
<dbReference type="EC" id="3.6.5.n1" evidence="1"/>
<dbReference type="EMBL" id="CP000828">
    <property type="protein sequence ID" value="ABW30217.1"/>
    <property type="molecule type" value="Genomic_DNA"/>
</dbReference>
<dbReference type="RefSeq" id="WP_012165475.1">
    <property type="nucleotide sequence ID" value="NC_009925.1"/>
</dbReference>
<dbReference type="SMR" id="B0C9R9"/>
<dbReference type="STRING" id="329726.AM1_5255"/>
<dbReference type="KEGG" id="amr:AM1_5255"/>
<dbReference type="eggNOG" id="COG0481">
    <property type="taxonomic scope" value="Bacteria"/>
</dbReference>
<dbReference type="HOGENOM" id="CLU_009995_3_3_3"/>
<dbReference type="OrthoDB" id="580826at2"/>
<dbReference type="Proteomes" id="UP000000268">
    <property type="component" value="Chromosome"/>
</dbReference>
<dbReference type="GO" id="GO:0005886">
    <property type="term" value="C:plasma membrane"/>
    <property type="evidence" value="ECO:0007669"/>
    <property type="project" value="UniProtKB-SubCell"/>
</dbReference>
<dbReference type="GO" id="GO:0005525">
    <property type="term" value="F:GTP binding"/>
    <property type="evidence" value="ECO:0007669"/>
    <property type="project" value="UniProtKB-KW"/>
</dbReference>
<dbReference type="GO" id="GO:0003924">
    <property type="term" value="F:GTPase activity"/>
    <property type="evidence" value="ECO:0007669"/>
    <property type="project" value="InterPro"/>
</dbReference>
<dbReference type="GO" id="GO:0043022">
    <property type="term" value="F:ribosome binding"/>
    <property type="evidence" value="ECO:0007669"/>
    <property type="project" value="TreeGrafter"/>
</dbReference>
<dbReference type="GO" id="GO:0045727">
    <property type="term" value="P:positive regulation of translation"/>
    <property type="evidence" value="ECO:0007669"/>
    <property type="project" value="TreeGrafter"/>
</dbReference>
<dbReference type="GO" id="GO:0006412">
    <property type="term" value="P:translation"/>
    <property type="evidence" value="ECO:0007669"/>
    <property type="project" value="UniProtKB-KW"/>
</dbReference>
<dbReference type="CDD" id="cd03699">
    <property type="entry name" value="EF4_II"/>
    <property type="match status" value="1"/>
</dbReference>
<dbReference type="CDD" id="cd16260">
    <property type="entry name" value="EF4_III"/>
    <property type="match status" value="1"/>
</dbReference>
<dbReference type="CDD" id="cd01890">
    <property type="entry name" value="LepA"/>
    <property type="match status" value="1"/>
</dbReference>
<dbReference type="CDD" id="cd03709">
    <property type="entry name" value="lepA_C"/>
    <property type="match status" value="1"/>
</dbReference>
<dbReference type="FunFam" id="3.40.50.300:FF:000078">
    <property type="entry name" value="Elongation factor 4"/>
    <property type="match status" value="1"/>
</dbReference>
<dbReference type="FunFam" id="2.40.30.10:FF:000015">
    <property type="entry name" value="Translation factor GUF1, mitochondrial"/>
    <property type="match status" value="1"/>
</dbReference>
<dbReference type="FunFam" id="3.30.70.240:FF:000007">
    <property type="entry name" value="Translation factor GUF1, mitochondrial"/>
    <property type="match status" value="1"/>
</dbReference>
<dbReference type="FunFam" id="3.30.70.2570:FF:000001">
    <property type="entry name" value="Translation factor GUF1, mitochondrial"/>
    <property type="match status" value="1"/>
</dbReference>
<dbReference type="FunFam" id="3.30.70.870:FF:000004">
    <property type="entry name" value="Translation factor GUF1, mitochondrial"/>
    <property type="match status" value="1"/>
</dbReference>
<dbReference type="Gene3D" id="3.30.70.240">
    <property type="match status" value="1"/>
</dbReference>
<dbReference type="Gene3D" id="3.30.70.2570">
    <property type="entry name" value="Elongation factor 4, C-terminal domain"/>
    <property type="match status" value="1"/>
</dbReference>
<dbReference type="Gene3D" id="3.30.70.870">
    <property type="entry name" value="Elongation Factor G (Translational Gtpase), domain 3"/>
    <property type="match status" value="1"/>
</dbReference>
<dbReference type="Gene3D" id="3.40.50.300">
    <property type="entry name" value="P-loop containing nucleotide triphosphate hydrolases"/>
    <property type="match status" value="1"/>
</dbReference>
<dbReference type="Gene3D" id="2.40.30.10">
    <property type="entry name" value="Translation factors"/>
    <property type="match status" value="1"/>
</dbReference>
<dbReference type="HAMAP" id="MF_03138">
    <property type="entry name" value="GUFP"/>
    <property type="match status" value="1"/>
</dbReference>
<dbReference type="HAMAP" id="MF_00071">
    <property type="entry name" value="LepA"/>
    <property type="match status" value="1"/>
</dbReference>
<dbReference type="InterPro" id="IPR006297">
    <property type="entry name" value="EF-4"/>
</dbReference>
<dbReference type="InterPro" id="IPR035647">
    <property type="entry name" value="EFG_III/V"/>
</dbReference>
<dbReference type="InterPro" id="IPR000640">
    <property type="entry name" value="EFG_V-like"/>
</dbReference>
<dbReference type="InterPro" id="IPR004161">
    <property type="entry name" value="EFTu-like_2"/>
</dbReference>
<dbReference type="InterPro" id="IPR031157">
    <property type="entry name" value="G_TR_CS"/>
</dbReference>
<dbReference type="InterPro" id="IPR027518">
    <property type="entry name" value="GUFP"/>
</dbReference>
<dbReference type="InterPro" id="IPR038363">
    <property type="entry name" value="LepA_C_sf"/>
</dbReference>
<dbReference type="InterPro" id="IPR013842">
    <property type="entry name" value="LepA_CTD"/>
</dbReference>
<dbReference type="InterPro" id="IPR035654">
    <property type="entry name" value="LepA_IV"/>
</dbReference>
<dbReference type="InterPro" id="IPR027417">
    <property type="entry name" value="P-loop_NTPase"/>
</dbReference>
<dbReference type="InterPro" id="IPR005225">
    <property type="entry name" value="Small_GTP-bd"/>
</dbReference>
<dbReference type="InterPro" id="IPR000795">
    <property type="entry name" value="T_Tr_GTP-bd_dom"/>
</dbReference>
<dbReference type="NCBIfam" id="TIGR01393">
    <property type="entry name" value="lepA"/>
    <property type="match status" value="1"/>
</dbReference>
<dbReference type="NCBIfam" id="TIGR00231">
    <property type="entry name" value="small_GTP"/>
    <property type="match status" value="1"/>
</dbReference>
<dbReference type="PANTHER" id="PTHR43512:SF4">
    <property type="entry name" value="TRANSLATION FACTOR GUF1 HOMOLOG, CHLOROPLASTIC"/>
    <property type="match status" value="1"/>
</dbReference>
<dbReference type="PANTHER" id="PTHR43512">
    <property type="entry name" value="TRANSLATION FACTOR GUF1-RELATED"/>
    <property type="match status" value="1"/>
</dbReference>
<dbReference type="Pfam" id="PF00679">
    <property type="entry name" value="EFG_C"/>
    <property type="match status" value="1"/>
</dbReference>
<dbReference type="Pfam" id="PF00009">
    <property type="entry name" value="GTP_EFTU"/>
    <property type="match status" value="1"/>
</dbReference>
<dbReference type="Pfam" id="PF03144">
    <property type="entry name" value="GTP_EFTU_D2"/>
    <property type="match status" value="1"/>
</dbReference>
<dbReference type="Pfam" id="PF06421">
    <property type="entry name" value="LepA_C"/>
    <property type="match status" value="1"/>
</dbReference>
<dbReference type="PRINTS" id="PR00315">
    <property type="entry name" value="ELONGATNFCT"/>
</dbReference>
<dbReference type="SMART" id="SM00838">
    <property type="entry name" value="EFG_C"/>
    <property type="match status" value="1"/>
</dbReference>
<dbReference type="SUPFAM" id="SSF54980">
    <property type="entry name" value="EF-G C-terminal domain-like"/>
    <property type="match status" value="2"/>
</dbReference>
<dbReference type="SUPFAM" id="SSF52540">
    <property type="entry name" value="P-loop containing nucleoside triphosphate hydrolases"/>
    <property type="match status" value="1"/>
</dbReference>
<dbReference type="PROSITE" id="PS00301">
    <property type="entry name" value="G_TR_1"/>
    <property type="match status" value="1"/>
</dbReference>
<dbReference type="PROSITE" id="PS51722">
    <property type="entry name" value="G_TR_2"/>
    <property type="match status" value="1"/>
</dbReference>
<accession>B0C9R9</accession>